<reference key="1">
    <citation type="submission" date="2003-06" db="EMBL/GenBank/DDBJ databases">
        <title>The complete genome sequence of Haemophilus ducreyi.</title>
        <authorList>
            <person name="Munson R.S. Jr."/>
            <person name="Ray W.C."/>
            <person name="Mahairas G."/>
            <person name="Sabo P."/>
            <person name="Mungur R."/>
            <person name="Johnson L."/>
            <person name="Nguyen D."/>
            <person name="Wang J."/>
            <person name="Forst C."/>
            <person name="Hood L."/>
        </authorList>
    </citation>
    <scope>NUCLEOTIDE SEQUENCE [LARGE SCALE GENOMIC DNA]</scope>
    <source>
        <strain>35000HP / ATCC 700724</strain>
    </source>
</reference>
<accession>Q7VN52</accession>
<sequence length="78" mass="8996">MSRVCQVTSKRPAVGNNRSHALNATRRRFLPNLHTHRFWVESENRFVTLRLTAKGMRIIDKKGIDAVLAEIRARGEKI</sequence>
<evidence type="ECO:0000255" key="1">
    <source>
        <dbReference type="HAMAP-Rule" id="MF_00373"/>
    </source>
</evidence>
<evidence type="ECO:0000256" key="2">
    <source>
        <dbReference type="SAM" id="MobiDB-lite"/>
    </source>
</evidence>
<evidence type="ECO:0000305" key="3"/>
<proteinExistence type="inferred from homology"/>
<organism>
    <name type="scientific">Haemophilus ducreyi (strain 35000HP / ATCC 700724)</name>
    <dbReference type="NCBI Taxonomy" id="233412"/>
    <lineage>
        <taxon>Bacteria</taxon>
        <taxon>Pseudomonadati</taxon>
        <taxon>Pseudomonadota</taxon>
        <taxon>Gammaproteobacteria</taxon>
        <taxon>Pasteurellales</taxon>
        <taxon>Pasteurellaceae</taxon>
        <taxon>Haemophilus</taxon>
    </lineage>
</organism>
<comment type="similarity">
    <text evidence="1">Belongs to the bacterial ribosomal protein bL28 family.</text>
</comment>
<protein>
    <recommendedName>
        <fullName evidence="1">Large ribosomal subunit protein bL28</fullName>
    </recommendedName>
    <alternativeName>
        <fullName evidence="3">50S ribosomal protein L28</fullName>
    </alternativeName>
</protein>
<dbReference type="EMBL" id="AE017143">
    <property type="protein sequence ID" value="AAP95643.1"/>
    <property type="molecule type" value="Genomic_DNA"/>
</dbReference>
<dbReference type="RefSeq" id="WP_010944695.1">
    <property type="nucleotide sequence ID" value="NC_002940.2"/>
</dbReference>
<dbReference type="SMR" id="Q7VN52"/>
<dbReference type="STRING" id="233412.HD_0731"/>
<dbReference type="KEGG" id="hdu:HD_0731"/>
<dbReference type="eggNOG" id="COG0227">
    <property type="taxonomic scope" value="Bacteria"/>
</dbReference>
<dbReference type="HOGENOM" id="CLU_064548_3_1_6"/>
<dbReference type="OrthoDB" id="9805609at2"/>
<dbReference type="Proteomes" id="UP000001022">
    <property type="component" value="Chromosome"/>
</dbReference>
<dbReference type="GO" id="GO:0022625">
    <property type="term" value="C:cytosolic large ribosomal subunit"/>
    <property type="evidence" value="ECO:0007669"/>
    <property type="project" value="TreeGrafter"/>
</dbReference>
<dbReference type="GO" id="GO:0003735">
    <property type="term" value="F:structural constituent of ribosome"/>
    <property type="evidence" value="ECO:0007669"/>
    <property type="project" value="InterPro"/>
</dbReference>
<dbReference type="GO" id="GO:0006412">
    <property type="term" value="P:translation"/>
    <property type="evidence" value="ECO:0007669"/>
    <property type="project" value="UniProtKB-UniRule"/>
</dbReference>
<dbReference type="FunFam" id="2.30.170.40:FF:000001">
    <property type="entry name" value="50S ribosomal protein L28"/>
    <property type="match status" value="1"/>
</dbReference>
<dbReference type="Gene3D" id="2.30.170.40">
    <property type="entry name" value="Ribosomal protein L28/L24"/>
    <property type="match status" value="1"/>
</dbReference>
<dbReference type="HAMAP" id="MF_00373">
    <property type="entry name" value="Ribosomal_bL28"/>
    <property type="match status" value="1"/>
</dbReference>
<dbReference type="InterPro" id="IPR026569">
    <property type="entry name" value="Ribosomal_bL28"/>
</dbReference>
<dbReference type="InterPro" id="IPR034704">
    <property type="entry name" value="Ribosomal_bL28/bL31-like_sf"/>
</dbReference>
<dbReference type="InterPro" id="IPR001383">
    <property type="entry name" value="Ribosomal_bL28_bact-type"/>
</dbReference>
<dbReference type="InterPro" id="IPR037147">
    <property type="entry name" value="Ribosomal_bL28_sf"/>
</dbReference>
<dbReference type="NCBIfam" id="TIGR00009">
    <property type="entry name" value="L28"/>
    <property type="match status" value="1"/>
</dbReference>
<dbReference type="PANTHER" id="PTHR13528">
    <property type="entry name" value="39S RIBOSOMAL PROTEIN L28, MITOCHONDRIAL"/>
    <property type="match status" value="1"/>
</dbReference>
<dbReference type="PANTHER" id="PTHR13528:SF2">
    <property type="entry name" value="LARGE RIBOSOMAL SUBUNIT PROTEIN BL28M"/>
    <property type="match status" value="1"/>
</dbReference>
<dbReference type="Pfam" id="PF00830">
    <property type="entry name" value="Ribosomal_L28"/>
    <property type="match status" value="1"/>
</dbReference>
<dbReference type="SUPFAM" id="SSF143800">
    <property type="entry name" value="L28p-like"/>
    <property type="match status" value="1"/>
</dbReference>
<feature type="chain" id="PRO_0000178479" description="Large ribosomal subunit protein bL28">
    <location>
        <begin position="1"/>
        <end position="78"/>
    </location>
</feature>
<feature type="region of interest" description="Disordered" evidence="2">
    <location>
        <begin position="1"/>
        <end position="20"/>
    </location>
</feature>
<keyword id="KW-1185">Reference proteome</keyword>
<keyword id="KW-0687">Ribonucleoprotein</keyword>
<keyword id="KW-0689">Ribosomal protein</keyword>
<gene>
    <name evidence="1" type="primary">rpmB</name>
    <name type="ordered locus">HD_0731</name>
</gene>
<name>RL28_HAEDU</name>